<proteinExistence type="inferred from homology"/>
<keyword id="KW-0997">Cell inner membrane</keyword>
<keyword id="KW-1003">Cell membrane</keyword>
<keyword id="KW-0444">Lipid biosynthesis</keyword>
<keyword id="KW-0443">Lipid metabolism</keyword>
<keyword id="KW-0472">Membrane</keyword>
<keyword id="KW-0594">Phospholipid biosynthesis</keyword>
<keyword id="KW-1208">Phospholipid metabolism</keyword>
<keyword id="KW-0677">Repeat</keyword>
<keyword id="KW-0808">Transferase</keyword>
<keyword id="KW-0812">Transmembrane</keyword>
<keyword id="KW-1133">Transmembrane helix</keyword>
<accession>Q1C7R0</accession>
<feature type="chain" id="PRO_1000058497" description="Cardiolipin synthase A">
    <location>
        <begin position="1"/>
        <end position="486"/>
    </location>
</feature>
<feature type="transmembrane region" description="Helical" evidence="1">
    <location>
        <begin position="3"/>
        <end position="23"/>
    </location>
</feature>
<feature type="transmembrane region" description="Helical" evidence="1">
    <location>
        <begin position="38"/>
        <end position="58"/>
    </location>
</feature>
<feature type="domain" description="PLD phosphodiesterase 1" evidence="1">
    <location>
        <begin position="219"/>
        <end position="246"/>
    </location>
</feature>
<feature type="domain" description="PLD phosphodiesterase 2" evidence="1">
    <location>
        <begin position="399"/>
        <end position="426"/>
    </location>
</feature>
<feature type="active site" evidence="1">
    <location>
        <position position="224"/>
    </location>
</feature>
<feature type="active site" evidence="1">
    <location>
        <position position="226"/>
    </location>
</feature>
<feature type="active site" evidence="1">
    <location>
        <position position="231"/>
    </location>
</feature>
<feature type="active site" evidence="1">
    <location>
        <position position="404"/>
    </location>
</feature>
<feature type="active site" evidence="1">
    <location>
        <position position="406"/>
    </location>
</feature>
<feature type="active site" evidence="1">
    <location>
        <position position="411"/>
    </location>
</feature>
<protein>
    <recommendedName>
        <fullName evidence="1">Cardiolipin synthase A</fullName>
        <shortName evidence="1">CL synthase</shortName>
        <ecNumber evidence="1">2.7.8.-</ecNumber>
    </recommendedName>
</protein>
<sequence length="486" mass="55127">MTTFYTVISWLSVFGYWLLIAGVTLRILMKRRAVPSAMAWLLIIYILPLVGIIAYLSFGELHLGKRRAERAKAMWPSTARWLSELKECQHIFANSNSEVASPLFQLCERRQGINGVKGNQLQLLTTTDDTLKALVRDIELARHNIEMVFYIWQPGGLVDQVAESLMAAARRGVHCRLLLDSAGSKQFFRSPYPAMMRNAGIEVVEALKVNVFRMFLRRMDLRQHRKIVLIDNYVAYTGSMNMVDPRFFKQDAGVGQWIDMMARMEGPVATTLGIVYACDWEIETGKRILPPPPDANIMPFEEETGHTIQVIASGPGFPEEMIHQALLTAVYAAREQLIMTTPYFVPSDDLLHAICTAAQRGVDVSIIVPRENDSMMVRWASRAFFTELLNAGVKIYQFEGGLLHSKSVLVDGQLSLVGTVNLDMRSLWLNFEITLVIDDDGFGADLAQVQDDYIARSALLDGERWNKRPLWHRVTERLFYFFSPLL</sequence>
<reference key="1">
    <citation type="journal article" date="2006" name="J. Bacteriol.">
        <title>Complete genome sequence of Yersinia pestis strains Antiqua and Nepal516: evidence of gene reduction in an emerging pathogen.</title>
        <authorList>
            <person name="Chain P.S.G."/>
            <person name="Hu P."/>
            <person name="Malfatti S.A."/>
            <person name="Radnedge L."/>
            <person name="Larimer F."/>
            <person name="Vergez L.M."/>
            <person name="Worsham P."/>
            <person name="Chu M.C."/>
            <person name="Andersen G.L."/>
        </authorList>
    </citation>
    <scope>NUCLEOTIDE SEQUENCE [LARGE SCALE GENOMIC DNA]</scope>
    <source>
        <strain>Antiqua</strain>
    </source>
</reference>
<name>CLSA_YERPA</name>
<organism>
    <name type="scientific">Yersinia pestis bv. Antiqua (strain Antiqua)</name>
    <dbReference type="NCBI Taxonomy" id="360102"/>
    <lineage>
        <taxon>Bacteria</taxon>
        <taxon>Pseudomonadati</taxon>
        <taxon>Pseudomonadota</taxon>
        <taxon>Gammaproteobacteria</taxon>
        <taxon>Enterobacterales</taxon>
        <taxon>Yersiniaceae</taxon>
        <taxon>Yersinia</taxon>
    </lineage>
</organism>
<dbReference type="EC" id="2.7.8.-" evidence="1"/>
<dbReference type="EMBL" id="CP000308">
    <property type="protein sequence ID" value="ABG13512.1"/>
    <property type="molecule type" value="Genomic_DNA"/>
</dbReference>
<dbReference type="RefSeq" id="WP_002210648.1">
    <property type="nucleotide sequence ID" value="NZ_CP009906.1"/>
</dbReference>
<dbReference type="SMR" id="Q1C7R0"/>
<dbReference type="GeneID" id="57976479"/>
<dbReference type="KEGG" id="ypa:YPA_1546"/>
<dbReference type="Proteomes" id="UP000001971">
    <property type="component" value="Chromosome"/>
</dbReference>
<dbReference type="GO" id="GO:0005886">
    <property type="term" value="C:plasma membrane"/>
    <property type="evidence" value="ECO:0007669"/>
    <property type="project" value="UniProtKB-SubCell"/>
</dbReference>
<dbReference type="GO" id="GO:0008808">
    <property type="term" value="F:cardiolipin synthase activity"/>
    <property type="evidence" value="ECO:0007669"/>
    <property type="project" value="InterPro"/>
</dbReference>
<dbReference type="GO" id="GO:0032049">
    <property type="term" value="P:cardiolipin biosynthetic process"/>
    <property type="evidence" value="ECO:0007669"/>
    <property type="project" value="InterPro"/>
</dbReference>
<dbReference type="CDD" id="cd09152">
    <property type="entry name" value="PLDc_EcCLS_like_1"/>
    <property type="match status" value="1"/>
</dbReference>
<dbReference type="CDD" id="cd09158">
    <property type="entry name" value="PLDc_EcCLS_like_2"/>
    <property type="match status" value="1"/>
</dbReference>
<dbReference type="FunFam" id="3.30.870.10:FF:000002">
    <property type="entry name" value="Cardiolipin synthase A"/>
    <property type="match status" value="1"/>
</dbReference>
<dbReference type="FunFam" id="3.30.870.10:FF:000003">
    <property type="entry name" value="Cardiolipin synthase A"/>
    <property type="match status" value="1"/>
</dbReference>
<dbReference type="Gene3D" id="3.30.870.10">
    <property type="entry name" value="Endonuclease Chain A"/>
    <property type="match status" value="2"/>
</dbReference>
<dbReference type="HAMAP" id="MF_00190">
    <property type="entry name" value="Cardiolipin_synth_ClsA"/>
    <property type="match status" value="1"/>
</dbReference>
<dbReference type="InterPro" id="IPR022924">
    <property type="entry name" value="Cardiolipin_synthase"/>
</dbReference>
<dbReference type="InterPro" id="IPR030840">
    <property type="entry name" value="CL_synthase_A"/>
</dbReference>
<dbReference type="InterPro" id="IPR027379">
    <property type="entry name" value="CLS_N"/>
</dbReference>
<dbReference type="InterPro" id="IPR025202">
    <property type="entry name" value="PLD-like_dom"/>
</dbReference>
<dbReference type="InterPro" id="IPR001736">
    <property type="entry name" value="PLipase_D/transphosphatidylase"/>
</dbReference>
<dbReference type="NCBIfam" id="TIGR04265">
    <property type="entry name" value="bac_cardiolipin"/>
    <property type="match status" value="1"/>
</dbReference>
<dbReference type="PANTHER" id="PTHR21248">
    <property type="entry name" value="CARDIOLIPIN SYNTHASE"/>
    <property type="match status" value="1"/>
</dbReference>
<dbReference type="PANTHER" id="PTHR21248:SF22">
    <property type="entry name" value="PHOSPHOLIPASE D"/>
    <property type="match status" value="1"/>
</dbReference>
<dbReference type="Pfam" id="PF13091">
    <property type="entry name" value="PLDc_2"/>
    <property type="match status" value="2"/>
</dbReference>
<dbReference type="Pfam" id="PF13396">
    <property type="entry name" value="PLDc_N"/>
    <property type="match status" value="1"/>
</dbReference>
<dbReference type="SMART" id="SM00155">
    <property type="entry name" value="PLDc"/>
    <property type="match status" value="2"/>
</dbReference>
<dbReference type="SUPFAM" id="SSF56024">
    <property type="entry name" value="Phospholipase D/nuclease"/>
    <property type="match status" value="2"/>
</dbReference>
<dbReference type="PROSITE" id="PS50035">
    <property type="entry name" value="PLD"/>
    <property type="match status" value="2"/>
</dbReference>
<gene>
    <name evidence="1" type="primary">clsA</name>
    <name type="synonym">cls</name>
    <name type="ordered locus">YPA_1546</name>
</gene>
<comment type="function">
    <text evidence="1">Catalyzes the reversible phosphatidyl group transfer from one phosphatidylglycerol molecule to another to form cardiolipin (CL) (diphosphatidylglycerol) and glycerol.</text>
</comment>
<comment type="catalytic activity">
    <reaction evidence="1">
        <text>2 a 1,2-diacyl-sn-glycero-3-phospho-(1'-sn-glycerol) = a cardiolipin + glycerol</text>
        <dbReference type="Rhea" id="RHEA:31451"/>
        <dbReference type="ChEBI" id="CHEBI:17754"/>
        <dbReference type="ChEBI" id="CHEBI:62237"/>
        <dbReference type="ChEBI" id="CHEBI:64716"/>
    </reaction>
</comment>
<comment type="subcellular location">
    <subcellularLocation>
        <location evidence="1">Cell inner membrane</location>
        <topology evidence="1">Multi-pass membrane protein</topology>
    </subcellularLocation>
</comment>
<comment type="similarity">
    <text evidence="1">Belongs to the phospholipase D family. Cardiolipin synthase subfamily. ClsA sub-subfamily.</text>
</comment>
<evidence type="ECO:0000255" key="1">
    <source>
        <dbReference type="HAMAP-Rule" id="MF_00190"/>
    </source>
</evidence>